<dbReference type="EMBL" id="AY261360">
    <property type="status" value="NOT_ANNOTATED_CDS"/>
    <property type="molecule type" value="Genomic_DNA"/>
</dbReference>
<dbReference type="SMR" id="P0C9T2"/>
<dbReference type="Proteomes" id="UP000000861">
    <property type="component" value="Segment"/>
</dbReference>
<dbReference type="Gene3D" id="1.25.40.20">
    <property type="entry name" value="Ankyrin repeat-containing domain"/>
    <property type="match status" value="1"/>
</dbReference>
<dbReference type="InterPro" id="IPR036770">
    <property type="entry name" value="Ankyrin_rpt-contain_sf"/>
</dbReference>
<dbReference type="InterPro" id="IPR004858">
    <property type="entry name" value="MGF_505"/>
</dbReference>
<dbReference type="Pfam" id="PF03158">
    <property type="entry name" value="DUF249"/>
    <property type="match status" value="1"/>
</dbReference>
<dbReference type="SUPFAM" id="SSF48403">
    <property type="entry name" value="Ankyrin repeat"/>
    <property type="match status" value="1"/>
</dbReference>
<accession>P0C9T2</accession>
<comment type="function">
    <text evidence="1">Plays a role in virus cell tropism, and may be required for efficient virus replication in macrophages.</text>
</comment>
<comment type="similarity">
    <text evidence="2">Belongs to the asfivirus MGF 505 family.</text>
</comment>
<feature type="chain" id="PRO_0000373328" description="Protein MGF 505-4R">
    <location>
        <begin position="1"/>
        <end position="506"/>
    </location>
</feature>
<sequence length="506" mass="59023">MFSLQDICRKHLFLLPSSFNEYILQVLGLYWEKHGSLQRIRKDAVFVQRNITLSTNEALRIAASEGNERVVKLLLSWEGNFHYVIIGALEGDQYDLIHKYNSQIKDYHVILSSIQNANTFEKCHQLYNCTMWRLVQNAIKYNMLSILQKHRNLLTDEGDNQELFEKACEEQKYDIVLWIGQTLMLDEPKSIFDIALERIDFSLLIMGYSLLFANKMSSIDIHDEEDLTSLLTEHLEKAATKGCLFFMQETLKHGGNVNIAVLSKAVEYNHRKILDYFIRRQKCLSRKDIEKLLLIAIKDGGSKKTLNLLLSYLNYSVQNMIGKIVEAVINDGDFTIIIILKKKKINLVDSVLAGFLDHFHTYCFIKVFIHEFAIRPEKIIKMAARKDKLDIIIEFFNDIYPHKDDLGTILNILKNIVNTMKHKEGKEVLIGLIHKIYRIIHLENKEMFNLVRFYIMHNANIQFISICKDCFNLAGFKPFLSECLDIAIKKNYPDIVRNIKIQLKYE</sequence>
<gene>
    <name type="ordered locus">Ken-041</name>
</gene>
<organismHost>
    <name type="scientific">Ornithodoros</name>
    <name type="common">relapsing fever ticks</name>
    <dbReference type="NCBI Taxonomy" id="6937"/>
</organismHost>
<organismHost>
    <name type="scientific">Phacochoerus aethiopicus</name>
    <name type="common">Warthog</name>
    <dbReference type="NCBI Taxonomy" id="85517"/>
</organismHost>
<organismHost>
    <name type="scientific">Phacochoerus africanus</name>
    <name type="common">Warthog</name>
    <dbReference type="NCBI Taxonomy" id="41426"/>
</organismHost>
<organismHost>
    <name type="scientific">Potamochoerus larvatus</name>
    <name type="common">Bushpig</name>
    <dbReference type="NCBI Taxonomy" id="273792"/>
</organismHost>
<organismHost>
    <name type="scientific">Sus scrofa</name>
    <name type="common">Pig</name>
    <dbReference type="NCBI Taxonomy" id="9823"/>
</organismHost>
<organism>
    <name type="scientific">African swine fever virus (isolate Pig/Kenya/KEN-50/1950)</name>
    <name type="common">ASFV</name>
    <dbReference type="NCBI Taxonomy" id="561445"/>
    <lineage>
        <taxon>Viruses</taxon>
        <taxon>Varidnaviria</taxon>
        <taxon>Bamfordvirae</taxon>
        <taxon>Nucleocytoviricota</taxon>
        <taxon>Pokkesviricetes</taxon>
        <taxon>Asfuvirales</taxon>
        <taxon>Asfarviridae</taxon>
        <taxon>Asfivirus</taxon>
        <taxon>African swine fever virus</taxon>
    </lineage>
</organism>
<name>5054R_ASFK5</name>
<evidence type="ECO:0000250" key="1"/>
<evidence type="ECO:0000305" key="2"/>
<reference key="1">
    <citation type="submission" date="2003-03" db="EMBL/GenBank/DDBJ databases">
        <title>African swine fever virus genomes.</title>
        <authorList>
            <person name="Kutish G.F."/>
            <person name="Rock D.L."/>
        </authorList>
    </citation>
    <scope>NUCLEOTIDE SEQUENCE [LARGE SCALE GENOMIC DNA]</scope>
</reference>
<proteinExistence type="inferred from homology"/>
<protein>
    <recommendedName>
        <fullName>Protein MGF 505-4R</fullName>
    </recommendedName>
</protein>